<proteinExistence type="evidence at transcript level"/>
<accession>Q9FN67</accession>
<accession>Q0WL39</accession>
<protein>
    <recommendedName>
        <fullName>BTB/POZ domain-containing protein At5g41330</fullName>
    </recommendedName>
</protein>
<keyword id="KW-1185">Reference proteome</keyword>
<keyword id="KW-0677">Repeat</keyword>
<keyword id="KW-0833">Ubl conjugation pathway</keyword>
<keyword id="KW-0853">WD repeat</keyword>
<organism>
    <name type="scientific">Arabidopsis thaliana</name>
    <name type="common">Mouse-ear cress</name>
    <dbReference type="NCBI Taxonomy" id="3702"/>
    <lineage>
        <taxon>Eukaryota</taxon>
        <taxon>Viridiplantae</taxon>
        <taxon>Streptophyta</taxon>
        <taxon>Embryophyta</taxon>
        <taxon>Tracheophyta</taxon>
        <taxon>Spermatophyta</taxon>
        <taxon>Magnoliopsida</taxon>
        <taxon>eudicotyledons</taxon>
        <taxon>Gunneridae</taxon>
        <taxon>Pentapetalae</taxon>
        <taxon>rosids</taxon>
        <taxon>malvids</taxon>
        <taxon>Brassicales</taxon>
        <taxon>Brassicaceae</taxon>
        <taxon>Camelineae</taxon>
        <taxon>Arabidopsis</taxon>
    </lineage>
</organism>
<reference key="1">
    <citation type="journal article" date="1997" name="DNA Res.">
        <title>Structural analysis of Arabidopsis thaliana chromosome 5. II. Sequence features of the regions of 1,044,062 bp covered by thirteen physically assigned P1 clones.</title>
        <authorList>
            <person name="Kotani H."/>
            <person name="Nakamura Y."/>
            <person name="Sato S."/>
            <person name="Kaneko T."/>
            <person name="Asamizu E."/>
            <person name="Miyajima N."/>
            <person name="Tabata S."/>
        </authorList>
    </citation>
    <scope>NUCLEOTIDE SEQUENCE [LARGE SCALE GENOMIC DNA]</scope>
    <source>
        <strain>cv. Columbia</strain>
    </source>
</reference>
<reference key="2">
    <citation type="journal article" date="2017" name="Plant J.">
        <title>Araport11: a complete reannotation of the Arabidopsis thaliana reference genome.</title>
        <authorList>
            <person name="Cheng C.Y."/>
            <person name="Krishnakumar V."/>
            <person name="Chan A.P."/>
            <person name="Thibaud-Nissen F."/>
            <person name="Schobel S."/>
            <person name="Town C.D."/>
        </authorList>
    </citation>
    <scope>GENOME REANNOTATION</scope>
    <source>
        <strain>cv. Columbia</strain>
    </source>
</reference>
<reference key="3">
    <citation type="submission" date="2004-10" db="EMBL/GenBank/DDBJ databases">
        <title>Arabidopsis ORF clones.</title>
        <authorList>
            <person name="Shinn P."/>
            <person name="Chen H."/>
            <person name="Cheuk R.F."/>
            <person name="Kim C.J."/>
            <person name="Ecker J.R."/>
        </authorList>
    </citation>
    <scope>NUCLEOTIDE SEQUENCE [LARGE SCALE MRNA]</scope>
    <source>
        <strain>cv. Columbia</strain>
    </source>
</reference>
<reference key="4">
    <citation type="submission" date="2006-07" db="EMBL/GenBank/DDBJ databases">
        <title>Large-scale analysis of RIKEN Arabidopsis full-length (RAFL) cDNAs.</title>
        <authorList>
            <person name="Totoki Y."/>
            <person name="Seki M."/>
            <person name="Ishida J."/>
            <person name="Nakajima M."/>
            <person name="Enju A."/>
            <person name="Kamiya A."/>
            <person name="Narusaka M."/>
            <person name="Shin-i T."/>
            <person name="Nakagawa M."/>
            <person name="Sakamoto N."/>
            <person name="Oishi K."/>
            <person name="Kohara Y."/>
            <person name="Kobayashi M."/>
            <person name="Toyoda A."/>
            <person name="Sakaki Y."/>
            <person name="Sakurai T."/>
            <person name="Iida K."/>
            <person name="Akiyama K."/>
            <person name="Satou M."/>
            <person name="Toyoda T."/>
            <person name="Konagaya A."/>
            <person name="Carninci P."/>
            <person name="Kawai J."/>
            <person name="Hayashizaki Y."/>
            <person name="Shinozaki K."/>
        </authorList>
    </citation>
    <scope>NUCLEOTIDE SEQUENCE [LARGE SCALE MRNA]</scope>
    <source>
        <strain>cv. Columbia</strain>
    </source>
</reference>
<reference key="5">
    <citation type="journal article" date="2005" name="J. Biol. Chem.">
        <title>Cullins 3a and 3b assemble with members of the broad complex/tramtrack/bric-a-brac (BTB) protein family to form essential ubiquitin-protein ligases (E3s) in Arabidopsis.</title>
        <authorList>
            <person name="Gingerich D.J."/>
            <person name="Gagne J.M."/>
            <person name="Salter D.W."/>
            <person name="Hellmann H."/>
            <person name="Estelle M."/>
            <person name="Ma L."/>
            <person name="Vierstra R.D."/>
        </authorList>
    </citation>
    <scope>DOMAIN BTB</scope>
</reference>
<comment type="function">
    <text evidence="1">May act as a substrate-specific adapter of an E3 ubiquitin-protein ligase complex (CUL3-RBX1-BTB) which mediates the ubiquitination and subsequent proteasomal degradation of target proteins.</text>
</comment>
<comment type="pathway">
    <text>Protein modification; protein ubiquitination.</text>
</comment>
<comment type="domain">
    <text evidence="2">The BTB/POZ domain mediates the interaction with some component of ubiquitin ligase complexes.</text>
</comment>
<name>Y5133_ARATH</name>
<evidence type="ECO:0000250" key="1"/>
<evidence type="ECO:0000269" key="2">
    <source>
    </source>
</evidence>
<evidence type="ECO:0000305" key="3"/>
<sequence>MNFPTIPHESNVVSINVGGRIFQTTKQTLSLAGTDSLLSQLATETTRFVDRDPDLFSVLLYILRTGNLPARSRAFDVRDLIDESRYYGIESFLIDSLSNSSQFEPFDLRRSRILQLNGRDSPSSISPTVIGGGLHVAHGSKITSFDWSLRQKSTVLTNFSAVDSLLEISPGVLAAGATDFPGLQIIDLDNGGFVRTTLNWENVTRSSSTVQAIGSSHEFLFTSFESSRRNSNSIMVYDLSSLLPVSEIDHCEIYGADIDSAIPSTKLKWIQSCNLLMVSGSHTSPSGVNGHIRFWDVRSRNMVWEIKEAQDCFSDVTVSDNLSAVFKVGVTSGEVFYADLRSLGTKDPWVCLGEEKKRNLNERRGVGSKIESYGNHVFCSSKGSGIELWSEVITGLVGNASRDVLEERVFRKNSLGKLADSGENKITGLAFGGNRMFVTRKDQQSVQVWQSPSRGISI</sequence>
<gene>
    <name type="ordered locus">At5g41330</name>
    <name type="ORF">MYC6.4</name>
</gene>
<dbReference type="EMBL" id="AB006707">
    <property type="protein sequence ID" value="BAB08505.1"/>
    <property type="molecule type" value="Genomic_DNA"/>
</dbReference>
<dbReference type="EMBL" id="CP002688">
    <property type="protein sequence ID" value="AED94666.1"/>
    <property type="molecule type" value="Genomic_DNA"/>
</dbReference>
<dbReference type="EMBL" id="CP002688">
    <property type="protein sequence ID" value="ANM71072.1"/>
    <property type="molecule type" value="Genomic_DNA"/>
</dbReference>
<dbReference type="EMBL" id="BT015947">
    <property type="protein sequence ID" value="AAV34777.1"/>
    <property type="molecule type" value="mRNA"/>
</dbReference>
<dbReference type="EMBL" id="AK230358">
    <property type="protein sequence ID" value="BAF02157.1"/>
    <property type="molecule type" value="mRNA"/>
</dbReference>
<dbReference type="EMBL" id="AK230359">
    <property type="protein sequence ID" value="BAF02158.1"/>
    <property type="molecule type" value="mRNA"/>
</dbReference>
<dbReference type="EMBL" id="AK230369">
    <property type="protein sequence ID" value="BAF02168.1"/>
    <property type="molecule type" value="mRNA"/>
</dbReference>
<dbReference type="RefSeq" id="NP_001332628.1">
    <property type="nucleotide sequence ID" value="NM_001344398.1"/>
</dbReference>
<dbReference type="RefSeq" id="NP_198949.1">
    <property type="nucleotide sequence ID" value="NM_123498.2"/>
</dbReference>
<dbReference type="FunCoup" id="Q9FN67">
    <property type="interactions" value="1278"/>
</dbReference>
<dbReference type="STRING" id="3702.Q9FN67"/>
<dbReference type="PaxDb" id="3702-AT5G41330.1"/>
<dbReference type="ProteomicsDB" id="243130"/>
<dbReference type="DNASU" id="834135"/>
<dbReference type="EnsemblPlants" id="AT5G41330.1">
    <property type="protein sequence ID" value="AT5G41330.1"/>
    <property type="gene ID" value="AT5G41330"/>
</dbReference>
<dbReference type="EnsemblPlants" id="AT5G41330.2">
    <property type="protein sequence ID" value="AT5G41330.2"/>
    <property type="gene ID" value="AT5G41330"/>
</dbReference>
<dbReference type="GeneID" id="834135"/>
<dbReference type="Gramene" id="AT5G41330.1">
    <property type="protein sequence ID" value="AT5G41330.1"/>
    <property type="gene ID" value="AT5G41330"/>
</dbReference>
<dbReference type="Gramene" id="AT5G41330.2">
    <property type="protein sequence ID" value="AT5G41330.2"/>
    <property type="gene ID" value="AT5G41330"/>
</dbReference>
<dbReference type="KEGG" id="ath:AT5G41330"/>
<dbReference type="Araport" id="AT5G41330"/>
<dbReference type="TAIR" id="AT5G41330"/>
<dbReference type="eggNOG" id="KOG2714">
    <property type="taxonomic scope" value="Eukaryota"/>
</dbReference>
<dbReference type="HOGENOM" id="CLU_045194_1_0_1"/>
<dbReference type="InParanoid" id="Q9FN67"/>
<dbReference type="OMA" id="MVWEIKE"/>
<dbReference type="OrthoDB" id="6077599at2759"/>
<dbReference type="PhylomeDB" id="Q9FN67"/>
<dbReference type="UniPathway" id="UPA00143"/>
<dbReference type="PRO" id="PR:Q9FN67"/>
<dbReference type="Proteomes" id="UP000006548">
    <property type="component" value="Chromosome 5"/>
</dbReference>
<dbReference type="ExpressionAtlas" id="Q9FN67">
    <property type="expression patterns" value="baseline and differential"/>
</dbReference>
<dbReference type="GO" id="GO:0051260">
    <property type="term" value="P:protein homooligomerization"/>
    <property type="evidence" value="ECO:0007669"/>
    <property type="project" value="InterPro"/>
</dbReference>
<dbReference type="GO" id="GO:0016567">
    <property type="term" value="P:protein ubiquitination"/>
    <property type="evidence" value="ECO:0007669"/>
    <property type="project" value="UniProtKB-UniPathway"/>
</dbReference>
<dbReference type="CDD" id="cd18316">
    <property type="entry name" value="BTB_POZ_KCTD-like"/>
    <property type="match status" value="1"/>
</dbReference>
<dbReference type="Gene3D" id="3.30.710.10">
    <property type="entry name" value="Potassium Channel Kv1.1, Chain A"/>
    <property type="match status" value="1"/>
</dbReference>
<dbReference type="Gene3D" id="2.130.10.10">
    <property type="entry name" value="YVTN repeat-like/Quinoprotein amine dehydrogenase"/>
    <property type="match status" value="1"/>
</dbReference>
<dbReference type="InterPro" id="IPR045068">
    <property type="entry name" value="BACURD1-3"/>
</dbReference>
<dbReference type="InterPro" id="IPR000210">
    <property type="entry name" value="BTB/POZ_dom"/>
</dbReference>
<dbReference type="InterPro" id="IPR011333">
    <property type="entry name" value="SKP1/BTB/POZ_sf"/>
</dbReference>
<dbReference type="InterPro" id="IPR003131">
    <property type="entry name" value="T1-type_BTB"/>
</dbReference>
<dbReference type="InterPro" id="IPR015943">
    <property type="entry name" value="WD40/YVTN_repeat-like_dom_sf"/>
</dbReference>
<dbReference type="InterPro" id="IPR036322">
    <property type="entry name" value="WD40_repeat_dom_sf"/>
</dbReference>
<dbReference type="PANTHER" id="PTHR11145">
    <property type="entry name" value="BTB/POZ DOMAIN-CONTAINING ADAPTER FOR CUL3-MEDIATED RHOA DEGRADATION PROTEIN FAMILY MEMBER"/>
    <property type="match status" value="1"/>
</dbReference>
<dbReference type="PANTHER" id="PTHR11145:SF23">
    <property type="entry name" value="PROTEIN BINDING PROTEIN"/>
    <property type="match status" value="1"/>
</dbReference>
<dbReference type="Pfam" id="PF25279">
    <property type="entry name" value="Beta_prop_At2g24240"/>
    <property type="match status" value="1"/>
</dbReference>
<dbReference type="Pfam" id="PF02214">
    <property type="entry name" value="BTB_2"/>
    <property type="match status" value="1"/>
</dbReference>
<dbReference type="SMART" id="SM00225">
    <property type="entry name" value="BTB"/>
    <property type="match status" value="1"/>
</dbReference>
<dbReference type="SUPFAM" id="SSF54695">
    <property type="entry name" value="POZ domain"/>
    <property type="match status" value="1"/>
</dbReference>
<dbReference type="SUPFAM" id="SSF50978">
    <property type="entry name" value="WD40 repeat-like"/>
    <property type="match status" value="1"/>
</dbReference>
<feature type="chain" id="PRO_0000405332" description="BTB/POZ domain-containing protein At5g41330">
    <location>
        <begin position="1"/>
        <end position="458"/>
    </location>
</feature>
<feature type="domain" description="BTB">
    <location>
        <begin position="11"/>
        <end position="72"/>
    </location>
</feature>
<feature type="repeat" description="WD 1">
    <location>
        <begin position="259"/>
        <end position="305"/>
    </location>
</feature>
<feature type="repeat" description="WD 2">
    <location>
        <begin position="360"/>
        <end position="399"/>
    </location>
</feature>
<feature type="repeat" description="WD 3">
    <location>
        <begin position="421"/>
        <end position="458"/>
    </location>
</feature>
<feature type="sequence conflict" description="In Ref. 3; BAF02168." evidence="3" ref="3">
    <original>N</original>
    <variation>T</variation>
    <location>
        <position position="202"/>
    </location>
</feature>